<protein>
    <recommendedName>
        <fullName>Uncharacterized aminopeptidase MT1375</fullName>
        <ecNumber evidence="1">3.4.11.-</ecNumber>
    </recommendedName>
</protein>
<comment type="function">
    <text evidence="1">Aminopeptidase.</text>
</comment>
<comment type="subcellular location">
    <subcellularLocation>
        <location evidence="3">Cell membrane</location>
        <topology evidence="3">Multi-pass membrane protein</topology>
    </subcellularLocation>
</comment>
<comment type="similarity">
    <text evidence="3">Belongs to the peptidase S58 family.</text>
</comment>
<gene>
    <name type="ordered locus">MT1375</name>
</gene>
<accession>P9WM22</accession>
<accession>L0T6C1</accession>
<accession>P64811</accession>
<accession>Q10644</accession>
<sequence>MNSITDVGGIRVGHYQRLDPDASLGAGWACGVTVVLPPPGTVGAVDCRGGAPGTRETDLLDPANSVRFVDALLLAGGSAYGLAAADGVMRWLEEHRRGVAMDSGVVPIVPGAVIFDLPVGGWNCRPTADFGYSACAAAGVDVAVGTVGVGVGARAGALKGGVGTASATLQSGVTVGVLAVVNAAGNVVDPATGLPWMADLVGEFALRAPPAEQIAALAQLSSPLGAFNTPFNTTIGVIACDAALSPAACRRIAIAAHDGLARTIRPAHTPLDGDTVFALATGAVAVPPEAGVPAALSPETQLVTAVGAAAADCLARAVLAGVLNAQPVAGIPTYRDMFPGAFGS</sequence>
<feature type="chain" id="PRO_0000427379" description="Uncharacterized aminopeptidase MT1375">
    <location>
        <begin position="1"/>
        <end position="344"/>
    </location>
</feature>
<feature type="transmembrane region" description="Helical" evidence="2">
    <location>
        <begin position="25"/>
        <end position="45"/>
    </location>
</feature>
<feature type="transmembrane region" description="Helical" evidence="2">
    <location>
        <begin position="68"/>
        <end position="88"/>
    </location>
</feature>
<feature type="transmembrane region" description="Helical" evidence="2">
    <location>
        <begin position="104"/>
        <end position="124"/>
    </location>
</feature>
<feature type="transmembrane region" description="Helical" evidence="2">
    <location>
        <begin position="133"/>
        <end position="153"/>
    </location>
</feature>
<feature type="transmembrane region" description="Helical" evidence="2">
    <location>
        <begin position="161"/>
        <end position="181"/>
    </location>
</feature>
<feature type="transmembrane region" description="Helical" evidence="2">
    <location>
        <begin position="224"/>
        <end position="244"/>
    </location>
</feature>
<feature type="transmembrane region" description="Helical" evidence="2">
    <location>
        <begin position="276"/>
        <end position="296"/>
    </location>
</feature>
<feature type="transmembrane region" description="Helical" evidence="2">
    <location>
        <begin position="302"/>
        <end position="322"/>
    </location>
</feature>
<organism>
    <name type="scientific">Mycobacterium tuberculosis (strain CDC 1551 / Oshkosh)</name>
    <dbReference type="NCBI Taxonomy" id="83331"/>
    <lineage>
        <taxon>Bacteria</taxon>
        <taxon>Bacillati</taxon>
        <taxon>Actinomycetota</taxon>
        <taxon>Actinomycetes</taxon>
        <taxon>Mycobacteriales</taxon>
        <taxon>Mycobacteriaceae</taxon>
        <taxon>Mycobacterium</taxon>
        <taxon>Mycobacterium tuberculosis complex</taxon>
    </lineage>
</organism>
<proteinExistence type="inferred from homology"/>
<name>Y1333_MYCTO</name>
<keyword id="KW-0031">Aminopeptidase</keyword>
<keyword id="KW-1003">Cell membrane</keyword>
<keyword id="KW-0378">Hydrolase</keyword>
<keyword id="KW-0472">Membrane</keyword>
<keyword id="KW-0645">Protease</keyword>
<keyword id="KW-1185">Reference proteome</keyword>
<keyword id="KW-0812">Transmembrane</keyword>
<keyword id="KW-1133">Transmembrane helix</keyword>
<dbReference type="EC" id="3.4.11.-" evidence="1"/>
<dbReference type="EMBL" id="AE000516">
    <property type="protein sequence ID" value="AAK45639.1"/>
    <property type="molecule type" value="Genomic_DNA"/>
</dbReference>
<dbReference type="PIR" id="A70771">
    <property type="entry name" value="A70771"/>
</dbReference>
<dbReference type="RefSeq" id="WP_003406908.1">
    <property type="nucleotide sequence ID" value="NZ_KK341227.1"/>
</dbReference>
<dbReference type="SMR" id="P9WM22"/>
<dbReference type="MEROPS" id="P01.101"/>
<dbReference type="KEGG" id="mtc:MT1375"/>
<dbReference type="PATRIC" id="fig|83331.31.peg.1482"/>
<dbReference type="HOGENOM" id="CLU_044458_1_0_11"/>
<dbReference type="Proteomes" id="UP000001020">
    <property type="component" value="Chromosome"/>
</dbReference>
<dbReference type="GO" id="GO:0005886">
    <property type="term" value="C:plasma membrane"/>
    <property type="evidence" value="ECO:0007669"/>
    <property type="project" value="UniProtKB-SubCell"/>
</dbReference>
<dbReference type="GO" id="GO:0004177">
    <property type="term" value="F:aminopeptidase activity"/>
    <property type="evidence" value="ECO:0007669"/>
    <property type="project" value="UniProtKB-KW"/>
</dbReference>
<dbReference type="GO" id="GO:0006508">
    <property type="term" value="P:proteolysis"/>
    <property type="evidence" value="ECO:0007669"/>
    <property type="project" value="UniProtKB-KW"/>
</dbReference>
<dbReference type="CDD" id="cd02252">
    <property type="entry name" value="nylC_like"/>
    <property type="match status" value="1"/>
</dbReference>
<dbReference type="FunFam" id="3.60.70.12:FF:000003">
    <property type="entry name" value="Putative cysteine transferase"/>
    <property type="match status" value="1"/>
</dbReference>
<dbReference type="Gene3D" id="3.60.70.12">
    <property type="entry name" value="L-amino peptidase D-ALA esterase/amidase"/>
    <property type="match status" value="1"/>
</dbReference>
<dbReference type="InterPro" id="IPR016117">
    <property type="entry name" value="ArgJ-like_dom_sf"/>
</dbReference>
<dbReference type="InterPro" id="IPR005321">
    <property type="entry name" value="Peptidase_S58_DmpA"/>
</dbReference>
<dbReference type="PANTHER" id="PTHR36512:SF3">
    <property type="entry name" value="BLR5678 PROTEIN"/>
    <property type="match status" value="1"/>
</dbReference>
<dbReference type="PANTHER" id="PTHR36512">
    <property type="entry name" value="D-AMINOPEPTIDASE"/>
    <property type="match status" value="1"/>
</dbReference>
<dbReference type="Pfam" id="PF03576">
    <property type="entry name" value="Peptidase_S58"/>
    <property type="match status" value="1"/>
</dbReference>
<dbReference type="SUPFAM" id="SSF56266">
    <property type="entry name" value="DmpA/ArgJ-like"/>
    <property type="match status" value="1"/>
</dbReference>
<evidence type="ECO:0000250" key="1">
    <source>
        <dbReference type="UniProtKB" id="Q52VH2"/>
    </source>
</evidence>
<evidence type="ECO:0000255" key="2"/>
<evidence type="ECO:0000305" key="3"/>
<reference key="1">
    <citation type="journal article" date="2002" name="J. Bacteriol.">
        <title>Whole-genome comparison of Mycobacterium tuberculosis clinical and laboratory strains.</title>
        <authorList>
            <person name="Fleischmann R.D."/>
            <person name="Alland D."/>
            <person name="Eisen J.A."/>
            <person name="Carpenter L."/>
            <person name="White O."/>
            <person name="Peterson J.D."/>
            <person name="DeBoy R.T."/>
            <person name="Dodson R.J."/>
            <person name="Gwinn M.L."/>
            <person name="Haft D.H."/>
            <person name="Hickey E.K."/>
            <person name="Kolonay J.F."/>
            <person name="Nelson W.C."/>
            <person name="Umayam L.A."/>
            <person name="Ermolaeva M.D."/>
            <person name="Salzberg S.L."/>
            <person name="Delcher A."/>
            <person name="Utterback T.R."/>
            <person name="Weidman J.F."/>
            <person name="Khouri H.M."/>
            <person name="Gill J."/>
            <person name="Mikula A."/>
            <person name="Bishai W."/>
            <person name="Jacobs W.R. Jr."/>
            <person name="Venter J.C."/>
            <person name="Fraser C.M."/>
        </authorList>
    </citation>
    <scope>NUCLEOTIDE SEQUENCE [LARGE SCALE GENOMIC DNA]</scope>
    <source>
        <strain>CDC 1551 / Oshkosh</strain>
    </source>
</reference>